<keyword id="KW-0488">Methylation</keyword>
<keyword id="KW-0687">Ribonucleoprotein</keyword>
<keyword id="KW-0689">Ribosomal protein</keyword>
<keyword id="KW-0694">RNA-binding</keyword>
<keyword id="KW-0699">rRNA-binding</keyword>
<protein>
    <recommendedName>
        <fullName evidence="1">Large ribosomal subunit protein uL3</fullName>
    </recommendedName>
    <alternativeName>
        <fullName evidence="3">50S ribosomal protein L3</fullName>
    </alternativeName>
</protein>
<feature type="chain" id="PRO_1000141811" description="Large ribosomal subunit protein uL3">
    <location>
        <begin position="1"/>
        <end position="212"/>
    </location>
</feature>
<feature type="region of interest" description="Disordered" evidence="2">
    <location>
        <begin position="136"/>
        <end position="155"/>
    </location>
</feature>
<feature type="modified residue" description="N5-methylglutamine" evidence="1">
    <location>
        <position position="153"/>
    </location>
</feature>
<gene>
    <name evidence="1" type="primary">rplC</name>
    <name type="ordered locus">ABAYE0408</name>
</gene>
<reference key="1">
    <citation type="journal article" date="2008" name="PLoS ONE">
        <title>Comparative analysis of Acinetobacters: three genomes for three lifestyles.</title>
        <authorList>
            <person name="Vallenet D."/>
            <person name="Nordmann P."/>
            <person name="Barbe V."/>
            <person name="Poirel L."/>
            <person name="Mangenot S."/>
            <person name="Bataille E."/>
            <person name="Dossat C."/>
            <person name="Gas S."/>
            <person name="Kreimeyer A."/>
            <person name="Lenoble P."/>
            <person name="Oztas S."/>
            <person name="Poulain J."/>
            <person name="Segurens B."/>
            <person name="Robert C."/>
            <person name="Abergel C."/>
            <person name="Claverie J.-M."/>
            <person name="Raoult D."/>
            <person name="Medigue C."/>
            <person name="Weissenbach J."/>
            <person name="Cruveiller S."/>
        </authorList>
    </citation>
    <scope>NUCLEOTIDE SEQUENCE [LARGE SCALE GENOMIC DNA]</scope>
    <source>
        <strain>AYE</strain>
    </source>
</reference>
<evidence type="ECO:0000255" key="1">
    <source>
        <dbReference type="HAMAP-Rule" id="MF_01325"/>
    </source>
</evidence>
<evidence type="ECO:0000256" key="2">
    <source>
        <dbReference type="SAM" id="MobiDB-lite"/>
    </source>
</evidence>
<evidence type="ECO:0000305" key="3"/>
<sequence>MAIGLVGRKCGMTRIFTDAGVSVPVTVIEVDPNRITQIKTLETDGYQAVQVTTGERRESRVTNAQKGHFAKAGVAAGRLVKEFRVTEAELEGREVGGTIGVDLFTVGQIVDVTGQSKGKGFQGGVKRWNFRTQDATHGNSVSHRVLGSTGQNQTPGRVFKGKKMAGHLGDERVTVQGLEIVSVDTERSVLVVKGAIPGATGGDVIVRPTIKA</sequence>
<name>RL3_ACIBY</name>
<comment type="function">
    <text evidence="1">One of the primary rRNA binding proteins, it binds directly near the 3'-end of the 23S rRNA, where it nucleates assembly of the 50S subunit.</text>
</comment>
<comment type="subunit">
    <text evidence="1">Part of the 50S ribosomal subunit. Forms a cluster with proteins L14 and L19.</text>
</comment>
<comment type="PTM">
    <text evidence="1">Methylated by PrmB.</text>
</comment>
<comment type="similarity">
    <text evidence="1">Belongs to the universal ribosomal protein uL3 family.</text>
</comment>
<proteinExistence type="inferred from homology"/>
<organism>
    <name type="scientific">Acinetobacter baumannii (strain AYE)</name>
    <dbReference type="NCBI Taxonomy" id="509173"/>
    <lineage>
        <taxon>Bacteria</taxon>
        <taxon>Pseudomonadati</taxon>
        <taxon>Pseudomonadota</taxon>
        <taxon>Gammaproteobacteria</taxon>
        <taxon>Moraxellales</taxon>
        <taxon>Moraxellaceae</taxon>
        <taxon>Acinetobacter</taxon>
        <taxon>Acinetobacter calcoaceticus/baumannii complex</taxon>
    </lineage>
</organism>
<dbReference type="EMBL" id="CU459141">
    <property type="protein sequence ID" value="CAM85382.1"/>
    <property type="molecule type" value="Genomic_DNA"/>
</dbReference>
<dbReference type="RefSeq" id="WP_001982642.1">
    <property type="nucleotide sequence ID" value="NZ_JBDGFB010000011.1"/>
</dbReference>
<dbReference type="SMR" id="B0V6W8"/>
<dbReference type="EnsemblBacteria" id="CAM85382">
    <property type="protein sequence ID" value="CAM85382"/>
    <property type="gene ID" value="ABAYE0408"/>
</dbReference>
<dbReference type="GeneID" id="92895317"/>
<dbReference type="KEGG" id="aby:ABAYE0408"/>
<dbReference type="HOGENOM" id="CLU_044142_4_1_6"/>
<dbReference type="GO" id="GO:0022625">
    <property type="term" value="C:cytosolic large ribosomal subunit"/>
    <property type="evidence" value="ECO:0007669"/>
    <property type="project" value="TreeGrafter"/>
</dbReference>
<dbReference type="GO" id="GO:0019843">
    <property type="term" value="F:rRNA binding"/>
    <property type="evidence" value="ECO:0007669"/>
    <property type="project" value="UniProtKB-UniRule"/>
</dbReference>
<dbReference type="GO" id="GO:0003735">
    <property type="term" value="F:structural constituent of ribosome"/>
    <property type="evidence" value="ECO:0007669"/>
    <property type="project" value="InterPro"/>
</dbReference>
<dbReference type="GO" id="GO:0006412">
    <property type="term" value="P:translation"/>
    <property type="evidence" value="ECO:0007669"/>
    <property type="project" value="UniProtKB-UniRule"/>
</dbReference>
<dbReference type="FunFam" id="2.40.30.10:FF:000004">
    <property type="entry name" value="50S ribosomal protein L3"/>
    <property type="match status" value="1"/>
</dbReference>
<dbReference type="FunFam" id="3.30.160.810:FF:000001">
    <property type="entry name" value="50S ribosomal protein L3"/>
    <property type="match status" value="1"/>
</dbReference>
<dbReference type="Gene3D" id="3.30.160.810">
    <property type="match status" value="1"/>
</dbReference>
<dbReference type="Gene3D" id="2.40.30.10">
    <property type="entry name" value="Translation factors"/>
    <property type="match status" value="1"/>
</dbReference>
<dbReference type="HAMAP" id="MF_01325_B">
    <property type="entry name" value="Ribosomal_uL3_B"/>
    <property type="match status" value="1"/>
</dbReference>
<dbReference type="InterPro" id="IPR000597">
    <property type="entry name" value="Ribosomal_uL3"/>
</dbReference>
<dbReference type="InterPro" id="IPR019927">
    <property type="entry name" value="Ribosomal_uL3_bac/org-type"/>
</dbReference>
<dbReference type="InterPro" id="IPR019926">
    <property type="entry name" value="Ribosomal_uL3_CS"/>
</dbReference>
<dbReference type="InterPro" id="IPR009000">
    <property type="entry name" value="Transl_B-barrel_sf"/>
</dbReference>
<dbReference type="NCBIfam" id="TIGR03625">
    <property type="entry name" value="L3_bact"/>
    <property type="match status" value="1"/>
</dbReference>
<dbReference type="PANTHER" id="PTHR11229">
    <property type="entry name" value="50S RIBOSOMAL PROTEIN L3"/>
    <property type="match status" value="1"/>
</dbReference>
<dbReference type="PANTHER" id="PTHR11229:SF16">
    <property type="entry name" value="LARGE RIBOSOMAL SUBUNIT PROTEIN UL3C"/>
    <property type="match status" value="1"/>
</dbReference>
<dbReference type="Pfam" id="PF00297">
    <property type="entry name" value="Ribosomal_L3"/>
    <property type="match status" value="1"/>
</dbReference>
<dbReference type="SUPFAM" id="SSF50447">
    <property type="entry name" value="Translation proteins"/>
    <property type="match status" value="1"/>
</dbReference>
<dbReference type="PROSITE" id="PS00474">
    <property type="entry name" value="RIBOSOMAL_L3"/>
    <property type="match status" value="1"/>
</dbReference>
<accession>B0V6W8</accession>